<keyword id="KW-1185">Reference proteome</keyword>
<keyword id="KW-0687">Ribonucleoprotein</keyword>
<keyword id="KW-0689">Ribosomal protein</keyword>
<keyword id="KW-0694">RNA-binding</keyword>
<keyword id="KW-0699">rRNA-binding</keyword>
<sequence length="129" mass="14093">MVKELIRVKKRVKKQILDGIAHIHASFNNTIISISDKKGNVLGWATSGGSGFRGSRKSTPFAAQVAVERCADIVKSYGIKNLEVMVKGPGPGRESSIRTLNTIGFRIINITDVTPIPHNGCRSPKKRRV</sequence>
<dbReference type="EMBL" id="AE016826">
    <property type="protein sequence ID" value="AAO27150.1"/>
    <property type="molecule type" value="Genomic_DNA"/>
</dbReference>
<dbReference type="RefSeq" id="WP_011091551.1">
    <property type="nucleotide sequence ID" value="NC_004545.1"/>
</dbReference>
<dbReference type="SMR" id="P59484"/>
<dbReference type="STRING" id="224915.bbp_444"/>
<dbReference type="KEGG" id="bab:bbp_444"/>
<dbReference type="eggNOG" id="COG0100">
    <property type="taxonomic scope" value="Bacteria"/>
</dbReference>
<dbReference type="HOGENOM" id="CLU_072439_5_0_6"/>
<dbReference type="OrthoDB" id="9806415at2"/>
<dbReference type="Proteomes" id="UP000000601">
    <property type="component" value="Chromosome"/>
</dbReference>
<dbReference type="GO" id="GO:1990904">
    <property type="term" value="C:ribonucleoprotein complex"/>
    <property type="evidence" value="ECO:0007669"/>
    <property type="project" value="UniProtKB-KW"/>
</dbReference>
<dbReference type="GO" id="GO:0005840">
    <property type="term" value="C:ribosome"/>
    <property type="evidence" value="ECO:0007669"/>
    <property type="project" value="UniProtKB-KW"/>
</dbReference>
<dbReference type="GO" id="GO:0019843">
    <property type="term" value="F:rRNA binding"/>
    <property type="evidence" value="ECO:0007669"/>
    <property type="project" value="UniProtKB-UniRule"/>
</dbReference>
<dbReference type="GO" id="GO:0003735">
    <property type="term" value="F:structural constituent of ribosome"/>
    <property type="evidence" value="ECO:0007669"/>
    <property type="project" value="InterPro"/>
</dbReference>
<dbReference type="GO" id="GO:0006412">
    <property type="term" value="P:translation"/>
    <property type="evidence" value="ECO:0007669"/>
    <property type="project" value="UniProtKB-UniRule"/>
</dbReference>
<dbReference type="FunFam" id="3.30.420.80:FF:000001">
    <property type="entry name" value="30S ribosomal protein S11"/>
    <property type="match status" value="1"/>
</dbReference>
<dbReference type="Gene3D" id="3.30.420.80">
    <property type="entry name" value="Ribosomal protein S11"/>
    <property type="match status" value="1"/>
</dbReference>
<dbReference type="HAMAP" id="MF_01310">
    <property type="entry name" value="Ribosomal_uS11"/>
    <property type="match status" value="1"/>
</dbReference>
<dbReference type="InterPro" id="IPR001971">
    <property type="entry name" value="Ribosomal_uS11"/>
</dbReference>
<dbReference type="InterPro" id="IPR019981">
    <property type="entry name" value="Ribosomal_uS11_bac-type"/>
</dbReference>
<dbReference type="InterPro" id="IPR018102">
    <property type="entry name" value="Ribosomal_uS11_CS"/>
</dbReference>
<dbReference type="InterPro" id="IPR036967">
    <property type="entry name" value="Ribosomal_uS11_sf"/>
</dbReference>
<dbReference type="NCBIfam" id="NF003698">
    <property type="entry name" value="PRK05309.1"/>
    <property type="match status" value="1"/>
</dbReference>
<dbReference type="NCBIfam" id="TIGR03632">
    <property type="entry name" value="uS11_bact"/>
    <property type="match status" value="1"/>
</dbReference>
<dbReference type="PANTHER" id="PTHR11759">
    <property type="entry name" value="40S RIBOSOMAL PROTEIN S14/30S RIBOSOMAL PROTEIN S11"/>
    <property type="match status" value="1"/>
</dbReference>
<dbReference type="Pfam" id="PF00411">
    <property type="entry name" value="Ribosomal_S11"/>
    <property type="match status" value="1"/>
</dbReference>
<dbReference type="PIRSF" id="PIRSF002131">
    <property type="entry name" value="Ribosomal_S11"/>
    <property type="match status" value="1"/>
</dbReference>
<dbReference type="SUPFAM" id="SSF53137">
    <property type="entry name" value="Translational machinery components"/>
    <property type="match status" value="1"/>
</dbReference>
<dbReference type="PROSITE" id="PS00054">
    <property type="entry name" value="RIBOSOMAL_S11"/>
    <property type="match status" value="1"/>
</dbReference>
<comment type="function">
    <text evidence="1">Located on the platform of the 30S subunit, it bridges several disparate RNA helices of the 16S rRNA. Forms part of the Shine-Dalgarno cleft in the 70S ribosome.</text>
</comment>
<comment type="subunit">
    <text evidence="1">Part of the 30S ribosomal subunit. Interacts with proteins S7 and S18. Binds to IF-3.</text>
</comment>
<comment type="similarity">
    <text evidence="1">Belongs to the universal ribosomal protein uS11 family.</text>
</comment>
<reference key="1">
    <citation type="journal article" date="2003" name="Proc. Natl. Acad. Sci. U.S.A.">
        <title>Reductive genome evolution in Buchnera aphidicola.</title>
        <authorList>
            <person name="van Ham R.C.H.J."/>
            <person name="Kamerbeek J."/>
            <person name="Palacios C."/>
            <person name="Rausell C."/>
            <person name="Abascal F."/>
            <person name="Bastolla U."/>
            <person name="Fernandez J.M."/>
            <person name="Jimenez L."/>
            <person name="Postigo M."/>
            <person name="Silva F.J."/>
            <person name="Tamames J."/>
            <person name="Viguera E."/>
            <person name="Latorre A."/>
            <person name="Valencia A."/>
            <person name="Moran F."/>
            <person name="Moya A."/>
        </authorList>
    </citation>
    <scope>NUCLEOTIDE SEQUENCE [LARGE SCALE GENOMIC DNA]</scope>
    <source>
        <strain>Bp</strain>
    </source>
</reference>
<proteinExistence type="inferred from homology"/>
<protein>
    <recommendedName>
        <fullName evidence="1">Small ribosomal subunit protein uS11</fullName>
    </recommendedName>
    <alternativeName>
        <fullName evidence="2">30S ribosomal protein S11</fullName>
    </alternativeName>
</protein>
<gene>
    <name evidence="1" type="primary">rpsK</name>
    <name type="ordered locus">bbp_444</name>
</gene>
<name>RS11_BUCBP</name>
<accession>P59484</accession>
<evidence type="ECO:0000255" key="1">
    <source>
        <dbReference type="HAMAP-Rule" id="MF_01310"/>
    </source>
</evidence>
<evidence type="ECO:0000305" key="2"/>
<organism>
    <name type="scientific">Buchnera aphidicola subsp. Baizongia pistaciae (strain Bp)</name>
    <dbReference type="NCBI Taxonomy" id="224915"/>
    <lineage>
        <taxon>Bacteria</taxon>
        <taxon>Pseudomonadati</taxon>
        <taxon>Pseudomonadota</taxon>
        <taxon>Gammaproteobacteria</taxon>
        <taxon>Enterobacterales</taxon>
        <taxon>Erwiniaceae</taxon>
        <taxon>Buchnera</taxon>
    </lineage>
</organism>
<feature type="chain" id="PRO_0000123122" description="Small ribosomal subunit protein uS11">
    <location>
        <begin position="1"/>
        <end position="129"/>
    </location>
</feature>